<accession>A6Q7Y4</accession>
<protein>
    <recommendedName>
        <fullName evidence="1">Porphobilinogen deaminase</fullName>
        <shortName evidence="1">PBG</shortName>
        <ecNumber evidence="1">2.5.1.61</ecNumber>
    </recommendedName>
    <alternativeName>
        <fullName evidence="1">Hydroxymethylbilane synthase</fullName>
        <shortName evidence="1">HMBS</shortName>
    </alternativeName>
    <alternativeName>
        <fullName evidence="1">Pre-uroporphyrinogen synthase</fullName>
    </alternativeName>
</protein>
<sequence length="323" mass="36067">MEKLVIATRASNLALWQAYHIKERIETAFPEVRVELNEITSKGDKILDKPLALVGGKGHFTKELEDEMIAGNAHLAVHSLKDVPTYIPEGLELCAITERQDQSDVFLSHTYKSLSELPEGAVVGTTSLRRRMQLLEKRPDLKVKDLRGNVNTRLRKLKEGQYDAIILAYIGLYRLDLLKDIPYVEKLDFFIPPMGQAALGIEIVANNDRIREIAMTLNHEPTFICTKVERDFISVIGAGCSAPVAVNATMDKKEDDKVPTISVRAMIGYPDGTHILHKSLTVPLNEADILGDELAQAMIEEGALDILEQAEIIAFKDEMPERL</sequence>
<evidence type="ECO:0000255" key="1">
    <source>
        <dbReference type="HAMAP-Rule" id="MF_00260"/>
    </source>
</evidence>
<gene>
    <name evidence="1" type="primary">hemC</name>
    <name type="ordered locus">SUN_0634</name>
</gene>
<keyword id="KW-0627">Porphyrin biosynthesis</keyword>
<keyword id="KW-0808">Transferase</keyword>
<proteinExistence type="inferred from homology"/>
<feature type="chain" id="PRO_1000047770" description="Porphobilinogen deaminase">
    <location>
        <begin position="1"/>
        <end position="323"/>
    </location>
</feature>
<feature type="modified residue" description="S-(dipyrrolylmethanemethyl)cysteine" evidence="1">
    <location>
        <position position="240"/>
    </location>
</feature>
<organism>
    <name type="scientific">Sulfurovum sp. (strain NBC37-1)</name>
    <dbReference type="NCBI Taxonomy" id="387093"/>
    <lineage>
        <taxon>Bacteria</taxon>
        <taxon>Pseudomonadati</taxon>
        <taxon>Campylobacterota</taxon>
        <taxon>Epsilonproteobacteria</taxon>
        <taxon>Campylobacterales</taxon>
        <taxon>Sulfurovaceae</taxon>
        <taxon>Sulfurovum</taxon>
    </lineage>
</organism>
<reference key="1">
    <citation type="journal article" date="2007" name="Proc. Natl. Acad. Sci. U.S.A.">
        <title>Deep-sea vent epsilon-proteobacterial genomes provide insights into emergence of pathogens.</title>
        <authorList>
            <person name="Nakagawa S."/>
            <person name="Takaki Y."/>
            <person name="Shimamura S."/>
            <person name="Reysenbach A.-L."/>
            <person name="Takai K."/>
            <person name="Horikoshi K."/>
        </authorList>
    </citation>
    <scope>NUCLEOTIDE SEQUENCE [LARGE SCALE GENOMIC DNA]</scope>
    <source>
        <strain>NBC37-1</strain>
    </source>
</reference>
<comment type="function">
    <text evidence="1">Tetrapolymerization of the monopyrrole PBG into the hydroxymethylbilane pre-uroporphyrinogen in several discrete steps.</text>
</comment>
<comment type="catalytic activity">
    <reaction evidence="1">
        <text>4 porphobilinogen + H2O = hydroxymethylbilane + 4 NH4(+)</text>
        <dbReference type="Rhea" id="RHEA:13185"/>
        <dbReference type="ChEBI" id="CHEBI:15377"/>
        <dbReference type="ChEBI" id="CHEBI:28938"/>
        <dbReference type="ChEBI" id="CHEBI:57845"/>
        <dbReference type="ChEBI" id="CHEBI:58126"/>
        <dbReference type="EC" id="2.5.1.61"/>
    </reaction>
</comment>
<comment type="cofactor">
    <cofactor evidence="1">
        <name>dipyrromethane</name>
        <dbReference type="ChEBI" id="CHEBI:60342"/>
    </cofactor>
    <text evidence="1">Binds 1 dipyrromethane group covalently.</text>
</comment>
<comment type="pathway">
    <text evidence="1">Porphyrin-containing compound metabolism; protoporphyrin-IX biosynthesis; coproporphyrinogen-III from 5-aminolevulinate: step 2/4.</text>
</comment>
<comment type="subunit">
    <text evidence="1">Monomer.</text>
</comment>
<comment type="miscellaneous">
    <text evidence="1">The porphobilinogen subunits are added to the dipyrromethane group.</text>
</comment>
<comment type="similarity">
    <text evidence="1">Belongs to the HMBS family.</text>
</comment>
<dbReference type="EC" id="2.5.1.61" evidence="1"/>
<dbReference type="EMBL" id="AP009179">
    <property type="protein sequence ID" value="BAF71593.1"/>
    <property type="molecule type" value="Genomic_DNA"/>
</dbReference>
<dbReference type="RefSeq" id="WP_011980326.1">
    <property type="nucleotide sequence ID" value="NC_009663.1"/>
</dbReference>
<dbReference type="SMR" id="A6Q7Y4"/>
<dbReference type="STRING" id="387093.SUN_0634"/>
<dbReference type="KEGG" id="sun:SUN_0634"/>
<dbReference type="eggNOG" id="COG0181">
    <property type="taxonomic scope" value="Bacteria"/>
</dbReference>
<dbReference type="HOGENOM" id="CLU_019704_1_0_7"/>
<dbReference type="OrthoDB" id="9810298at2"/>
<dbReference type="UniPathway" id="UPA00251">
    <property type="reaction ID" value="UER00319"/>
</dbReference>
<dbReference type="Proteomes" id="UP000006378">
    <property type="component" value="Chromosome"/>
</dbReference>
<dbReference type="GO" id="GO:0005737">
    <property type="term" value="C:cytoplasm"/>
    <property type="evidence" value="ECO:0007669"/>
    <property type="project" value="TreeGrafter"/>
</dbReference>
<dbReference type="GO" id="GO:0004418">
    <property type="term" value="F:hydroxymethylbilane synthase activity"/>
    <property type="evidence" value="ECO:0007669"/>
    <property type="project" value="UniProtKB-UniRule"/>
</dbReference>
<dbReference type="GO" id="GO:0006782">
    <property type="term" value="P:protoporphyrinogen IX biosynthetic process"/>
    <property type="evidence" value="ECO:0007669"/>
    <property type="project" value="UniProtKB-UniRule"/>
</dbReference>
<dbReference type="FunFam" id="3.40.190.10:FF:000004">
    <property type="entry name" value="Porphobilinogen deaminase"/>
    <property type="match status" value="1"/>
</dbReference>
<dbReference type="FunFam" id="3.40.190.10:FF:000005">
    <property type="entry name" value="Porphobilinogen deaminase"/>
    <property type="match status" value="1"/>
</dbReference>
<dbReference type="Gene3D" id="3.40.190.10">
    <property type="entry name" value="Periplasmic binding protein-like II"/>
    <property type="match status" value="2"/>
</dbReference>
<dbReference type="Gene3D" id="3.30.160.40">
    <property type="entry name" value="Porphobilinogen deaminase, C-terminal domain"/>
    <property type="match status" value="1"/>
</dbReference>
<dbReference type="HAMAP" id="MF_00260">
    <property type="entry name" value="Porphobil_deam"/>
    <property type="match status" value="1"/>
</dbReference>
<dbReference type="InterPro" id="IPR000860">
    <property type="entry name" value="HemC"/>
</dbReference>
<dbReference type="InterPro" id="IPR022419">
    <property type="entry name" value="Porphobilin_deaminase_cofac_BS"/>
</dbReference>
<dbReference type="InterPro" id="IPR022417">
    <property type="entry name" value="Porphobilin_deaminase_N"/>
</dbReference>
<dbReference type="InterPro" id="IPR022418">
    <property type="entry name" value="Porphobilinogen_deaminase_C"/>
</dbReference>
<dbReference type="InterPro" id="IPR036803">
    <property type="entry name" value="Porphobilinogen_deaminase_C_sf"/>
</dbReference>
<dbReference type="NCBIfam" id="TIGR00212">
    <property type="entry name" value="hemC"/>
    <property type="match status" value="1"/>
</dbReference>
<dbReference type="PANTHER" id="PTHR11557">
    <property type="entry name" value="PORPHOBILINOGEN DEAMINASE"/>
    <property type="match status" value="1"/>
</dbReference>
<dbReference type="PANTHER" id="PTHR11557:SF0">
    <property type="entry name" value="PORPHOBILINOGEN DEAMINASE"/>
    <property type="match status" value="1"/>
</dbReference>
<dbReference type="Pfam" id="PF01379">
    <property type="entry name" value="Porphobil_deam"/>
    <property type="match status" value="1"/>
</dbReference>
<dbReference type="Pfam" id="PF03900">
    <property type="entry name" value="Porphobil_deamC"/>
    <property type="match status" value="1"/>
</dbReference>
<dbReference type="PIRSF" id="PIRSF001438">
    <property type="entry name" value="4pyrrol_synth_OHMeBilane_synth"/>
    <property type="match status" value="1"/>
</dbReference>
<dbReference type="PRINTS" id="PR00151">
    <property type="entry name" value="PORPHBDMNASE"/>
</dbReference>
<dbReference type="SUPFAM" id="SSF53850">
    <property type="entry name" value="Periplasmic binding protein-like II"/>
    <property type="match status" value="1"/>
</dbReference>
<dbReference type="SUPFAM" id="SSF54782">
    <property type="entry name" value="Porphobilinogen deaminase (hydroxymethylbilane synthase), C-terminal domain"/>
    <property type="match status" value="1"/>
</dbReference>
<dbReference type="PROSITE" id="PS00533">
    <property type="entry name" value="PORPHOBILINOGEN_DEAM"/>
    <property type="match status" value="1"/>
</dbReference>
<name>HEM3_SULNB</name>